<organism>
    <name type="scientific">Ureaplasma urealyticum serovar 10 (strain ATCC 33699 / Western)</name>
    <dbReference type="NCBI Taxonomy" id="565575"/>
    <lineage>
        <taxon>Bacteria</taxon>
        <taxon>Bacillati</taxon>
        <taxon>Mycoplasmatota</taxon>
        <taxon>Mycoplasmoidales</taxon>
        <taxon>Mycoplasmoidaceae</taxon>
        <taxon>Ureaplasma</taxon>
    </lineage>
</organism>
<comment type="similarity">
    <text evidence="1">Belongs to the bacterial ribosomal protein bS16 family.</text>
</comment>
<gene>
    <name evidence="1" type="primary">rpsP</name>
    <name type="ordered locus">UUR10_0665</name>
</gene>
<accession>B5ZC79</accession>
<proteinExistence type="inferred from homology"/>
<feature type="chain" id="PRO_1000122595" description="Small ribosomal subunit protein bS16">
    <location>
        <begin position="1"/>
        <end position="101"/>
    </location>
</feature>
<reference key="1">
    <citation type="submission" date="2008-10" db="EMBL/GenBank/DDBJ databases">
        <title>Genome sequence of Ureaplasma urealyticum serovar 10 ATCC-33699.</title>
        <authorList>
            <person name="Shrivastava S."/>
            <person name="Methe B.A."/>
            <person name="Glass J."/>
            <person name="White K."/>
            <person name="Duffy L.B."/>
        </authorList>
    </citation>
    <scope>NUCLEOTIDE SEQUENCE [LARGE SCALE GENOMIC DNA]</scope>
    <source>
        <strain>ATCC 33699 / Western</strain>
    </source>
</reference>
<name>RS16_UREU1</name>
<keyword id="KW-0687">Ribonucleoprotein</keyword>
<keyword id="KW-0689">Ribosomal protein</keyword>
<protein>
    <recommendedName>
        <fullName evidence="1">Small ribosomal subunit protein bS16</fullName>
    </recommendedName>
    <alternativeName>
        <fullName evidence="2">30S ribosomal protein S16</fullName>
    </alternativeName>
</protein>
<sequence>MKILVKIRLTRVGTHKKPFFRIVVMDAKAKANGAYIENLGHYDPVLGKVVLKKEAILAQLQNGAQPSETVKNILSQEGIWKEFIALKDANKKRKAALAKAK</sequence>
<evidence type="ECO:0000255" key="1">
    <source>
        <dbReference type="HAMAP-Rule" id="MF_00385"/>
    </source>
</evidence>
<evidence type="ECO:0000305" key="2"/>
<dbReference type="EMBL" id="CP001184">
    <property type="protein sequence ID" value="ACI60221.1"/>
    <property type="molecule type" value="Genomic_DNA"/>
</dbReference>
<dbReference type="SMR" id="B5ZC79"/>
<dbReference type="STRING" id="565575.UUR10_0665"/>
<dbReference type="KEGG" id="uue:UUR10_0665"/>
<dbReference type="eggNOG" id="COG0228">
    <property type="taxonomic scope" value="Bacteria"/>
</dbReference>
<dbReference type="HOGENOM" id="CLU_100590_5_2_14"/>
<dbReference type="Proteomes" id="UP000002018">
    <property type="component" value="Chromosome"/>
</dbReference>
<dbReference type="GO" id="GO:0005737">
    <property type="term" value="C:cytoplasm"/>
    <property type="evidence" value="ECO:0007669"/>
    <property type="project" value="UniProtKB-ARBA"/>
</dbReference>
<dbReference type="GO" id="GO:0015935">
    <property type="term" value="C:small ribosomal subunit"/>
    <property type="evidence" value="ECO:0007669"/>
    <property type="project" value="TreeGrafter"/>
</dbReference>
<dbReference type="GO" id="GO:0003735">
    <property type="term" value="F:structural constituent of ribosome"/>
    <property type="evidence" value="ECO:0007669"/>
    <property type="project" value="InterPro"/>
</dbReference>
<dbReference type="GO" id="GO:0006412">
    <property type="term" value="P:translation"/>
    <property type="evidence" value="ECO:0007669"/>
    <property type="project" value="UniProtKB-UniRule"/>
</dbReference>
<dbReference type="Gene3D" id="3.30.1320.10">
    <property type="match status" value="1"/>
</dbReference>
<dbReference type="HAMAP" id="MF_00385">
    <property type="entry name" value="Ribosomal_bS16"/>
    <property type="match status" value="1"/>
</dbReference>
<dbReference type="InterPro" id="IPR000307">
    <property type="entry name" value="Ribosomal_bS16"/>
</dbReference>
<dbReference type="InterPro" id="IPR023803">
    <property type="entry name" value="Ribosomal_bS16_dom_sf"/>
</dbReference>
<dbReference type="NCBIfam" id="TIGR00002">
    <property type="entry name" value="S16"/>
    <property type="match status" value="1"/>
</dbReference>
<dbReference type="PANTHER" id="PTHR12919">
    <property type="entry name" value="30S RIBOSOMAL PROTEIN S16"/>
    <property type="match status" value="1"/>
</dbReference>
<dbReference type="PANTHER" id="PTHR12919:SF20">
    <property type="entry name" value="SMALL RIBOSOMAL SUBUNIT PROTEIN BS16M"/>
    <property type="match status" value="1"/>
</dbReference>
<dbReference type="Pfam" id="PF00886">
    <property type="entry name" value="Ribosomal_S16"/>
    <property type="match status" value="1"/>
</dbReference>
<dbReference type="SUPFAM" id="SSF54565">
    <property type="entry name" value="Ribosomal protein S16"/>
    <property type="match status" value="1"/>
</dbReference>